<reference key="1">
    <citation type="journal article" date="2006" name="Mol. Microbiol.">
        <title>Role of pathogenicity island-associated integrases in the genome plasticity of uropathogenic Escherichia coli strain 536.</title>
        <authorList>
            <person name="Hochhut B."/>
            <person name="Wilde C."/>
            <person name="Balling G."/>
            <person name="Middendorf B."/>
            <person name="Dobrindt U."/>
            <person name="Brzuszkiewicz E."/>
            <person name="Gottschalk G."/>
            <person name="Carniel E."/>
            <person name="Hacker J."/>
        </authorList>
    </citation>
    <scope>NUCLEOTIDE SEQUENCE [LARGE SCALE GENOMIC DNA]</scope>
    <source>
        <strain>536 / UPEC</strain>
    </source>
</reference>
<sequence length="176" mass="19093">MTTIVSVRRNGHVVIAGDGQATLGNTVMKGNVKKVRRLYNDKVIAGFAGGTADAFTLFELFERKLEMHQGHLVKAAVELAKDWRTDRMLRKLEALLAVADETASLIITGNGDVVQPENDLIAIGSGGPYAQAAARALLENTELSAREIAEKALDIAGDICIYTNHFHTIEELSYKA</sequence>
<proteinExistence type="inferred from homology"/>
<comment type="function">
    <text evidence="1">Protease subunit of a proteasome-like degradation complex believed to be a general protein degrading machinery.</text>
</comment>
<comment type="catalytic activity">
    <reaction evidence="1">
        <text>ATP-dependent cleavage of peptide bonds with broad specificity.</text>
        <dbReference type="EC" id="3.4.25.2"/>
    </reaction>
</comment>
<comment type="activity regulation">
    <text evidence="1">Allosterically activated by HslU binding.</text>
</comment>
<comment type="subunit">
    <text evidence="1">A double ring-shaped homohexamer of HslV is capped on each side by a ring-shaped HslU homohexamer. The assembly of the HslU/HslV complex is dependent on binding of ATP.</text>
</comment>
<comment type="subcellular location">
    <subcellularLocation>
        <location evidence="1">Cytoplasm</location>
    </subcellularLocation>
</comment>
<comment type="induction">
    <text evidence="1">By heat shock.</text>
</comment>
<comment type="similarity">
    <text evidence="1">Belongs to the peptidase T1B family. HslV subfamily.</text>
</comment>
<name>HSLV_ECOL5</name>
<accession>Q0TAD2</accession>
<dbReference type="EC" id="3.4.25.2" evidence="1"/>
<dbReference type="EMBL" id="CP000247">
    <property type="protein sequence ID" value="ABG72097.1"/>
    <property type="molecule type" value="Genomic_DNA"/>
</dbReference>
<dbReference type="RefSeq" id="WP_000208242.1">
    <property type="nucleotide sequence ID" value="NC_008253.1"/>
</dbReference>
<dbReference type="SMR" id="Q0TAD2"/>
<dbReference type="MEROPS" id="T01.006"/>
<dbReference type="GeneID" id="93777966"/>
<dbReference type="KEGG" id="ecp:ECP_4141"/>
<dbReference type="HOGENOM" id="CLU_093872_1_0_6"/>
<dbReference type="Proteomes" id="UP000009182">
    <property type="component" value="Chromosome"/>
</dbReference>
<dbReference type="GO" id="GO:0009376">
    <property type="term" value="C:HslUV protease complex"/>
    <property type="evidence" value="ECO:0007669"/>
    <property type="project" value="UniProtKB-UniRule"/>
</dbReference>
<dbReference type="GO" id="GO:0005839">
    <property type="term" value="C:proteasome core complex"/>
    <property type="evidence" value="ECO:0007669"/>
    <property type="project" value="InterPro"/>
</dbReference>
<dbReference type="GO" id="GO:0046872">
    <property type="term" value="F:metal ion binding"/>
    <property type="evidence" value="ECO:0007669"/>
    <property type="project" value="UniProtKB-KW"/>
</dbReference>
<dbReference type="GO" id="GO:0004298">
    <property type="term" value="F:threonine-type endopeptidase activity"/>
    <property type="evidence" value="ECO:0007669"/>
    <property type="project" value="UniProtKB-KW"/>
</dbReference>
<dbReference type="GO" id="GO:0051603">
    <property type="term" value="P:proteolysis involved in protein catabolic process"/>
    <property type="evidence" value="ECO:0007669"/>
    <property type="project" value="InterPro"/>
</dbReference>
<dbReference type="CDD" id="cd01913">
    <property type="entry name" value="protease_HslV"/>
    <property type="match status" value="1"/>
</dbReference>
<dbReference type="FunFam" id="3.60.20.10:FF:000002">
    <property type="entry name" value="ATP-dependent protease subunit HslV"/>
    <property type="match status" value="1"/>
</dbReference>
<dbReference type="Gene3D" id="3.60.20.10">
    <property type="entry name" value="Glutamine Phosphoribosylpyrophosphate, subunit 1, domain 1"/>
    <property type="match status" value="1"/>
</dbReference>
<dbReference type="HAMAP" id="MF_00248">
    <property type="entry name" value="HslV"/>
    <property type="match status" value="1"/>
</dbReference>
<dbReference type="InterPro" id="IPR022281">
    <property type="entry name" value="ATP-dep_Prtase_HsIV_su"/>
</dbReference>
<dbReference type="InterPro" id="IPR029055">
    <property type="entry name" value="Ntn_hydrolases_N"/>
</dbReference>
<dbReference type="InterPro" id="IPR001353">
    <property type="entry name" value="Proteasome_sua/b"/>
</dbReference>
<dbReference type="InterPro" id="IPR023333">
    <property type="entry name" value="Proteasome_suB-type"/>
</dbReference>
<dbReference type="NCBIfam" id="TIGR03692">
    <property type="entry name" value="ATP_dep_HslV"/>
    <property type="match status" value="1"/>
</dbReference>
<dbReference type="NCBIfam" id="NF003964">
    <property type="entry name" value="PRK05456.1"/>
    <property type="match status" value="1"/>
</dbReference>
<dbReference type="PANTHER" id="PTHR32194:SF0">
    <property type="entry name" value="ATP-DEPENDENT PROTEASE SUBUNIT HSLV"/>
    <property type="match status" value="1"/>
</dbReference>
<dbReference type="PANTHER" id="PTHR32194">
    <property type="entry name" value="METALLOPROTEASE TLDD"/>
    <property type="match status" value="1"/>
</dbReference>
<dbReference type="Pfam" id="PF00227">
    <property type="entry name" value="Proteasome"/>
    <property type="match status" value="1"/>
</dbReference>
<dbReference type="PIRSF" id="PIRSF039093">
    <property type="entry name" value="HslV"/>
    <property type="match status" value="1"/>
</dbReference>
<dbReference type="SUPFAM" id="SSF56235">
    <property type="entry name" value="N-terminal nucleophile aminohydrolases (Ntn hydrolases)"/>
    <property type="match status" value="1"/>
</dbReference>
<dbReference type="PROSITE" id="PS51476">
    <property type="entry name" value="PROTEASOME_BETA_2"/>
    <property type="match status" value="1"/>
</dbReference>
<gene>
    <name evidence="1" type="primary">hslV</name>
    <name type="ordered locus">ECP_4141</name>
</gene>
<feature type="chain" id="PRO_1000012606" description="ATP-dependent protease subunit HslV">
    <location>
        <begin position="1"/>
        <end position="176"/>
    </location>
</feature>
<feature type="active site" evidence="1">
    <location>
        <position position="2"/>
    </location>
</feature>
<feature type="binding site" evidence="1">
    <location>
        <position position="157"/>
    </location>
    <ligand>
        <name>Na(+)</name>
        <dbReference type="ChEBI" id="CHEBI:29101"/>
    </ligand>
</feature>
<feature type="binding site" evidence="1">
    <location>
        <position position="160"/>
    </location>
    <ligand>
        <name>Na(+)</name>
        <dbReference type="ChEBI" id="CHEBI:29101"/>
    </ligand>
</feature>
<feature type="binding site" evidence="1">
    <location>
        <position position="163"/>
    </location>
    <ligand>
        <name>Na(+)</name>
        <dbReference type="ChEBI" id="CHEBI:29101"/>
    </ligand>
</feature>
<evidence type="ECO:0000255" key="1">
    <source>
        <dbReference type="HAMAP-Rule" id="MF_00248"/>
    </source>
</evidence>
<protein>
    <recommendedName>
        <fullName evidence="1">ATP-dependent protease subunit HslV</fullName>
        <ecNumber evidence="1">3.4.25.2</ecNumber>
    </recommendedName>
    <alternativeName>
        <fullName evidence="1">Heat shock protein HslV</fullName>
    </alternativeName>
</protein>
<organism>
    <name type="scientific">Escherichia coli O6:K15:H31 (strain 536 / UPEC)</name>
    <dbReference type="NCBI Taxonomy" id="362663"/>
    <lineage>
        <taxon>Bacteria</taxon>
        <taxon>Pseudomonadati</taxon>
        <taxon>Pseudomonadota</taxon>
        <taxon>Gammaproteobacteria</taxon>
        <taxon>Enterobacterales</taxon>
        <taxon>Enterobacteriaceae</taxon>
        <taxon>Escherichia</taxon>
    </lineage>
</organism>
<keyword id="KW-0021">Allosteric enzyme</keyword>
<keyword id="KW-0963">Cytoplasm</keyword>
<keyword id="KW-0378">Hydrolase</keyword>
<keyword id="KW-0479">Metal-binding</keyword>
<keyword id="KW-0645">Protease</keyword>
<keyword id="KW-0915">Sodium</keyword>
<keyword id="KW-0346">Stress response</keyword>
<keyword id="KW-0888">Threonine protease</keyword>